<protein>
    <recommendedName>
        <fullName evidence="2">Large ribosomal subunit protein uL22</fullName>
    </recommendedName>
    <alternativeName>
        <fullName>60S ribosomal protein L17</fullName>
    </alternativeName>
</protein>
<keyword id="KW-1185">Reference proteome</keyword>
<keyword id="KW-0687">Ribonucleoprotein</keyword>
<keyword id="KW-0689">Ribosomal protein</keyword>
<reference key="1">
    <citation type="submission" date="2006-06" db="EMBL/GenBank/DDBJ databases">
        <title>Ribosomal proteins of the Asian citrus psyllid, Diaphorina citri.</title>
        <authorList>
            <person name="Hunter W.B."/>
            <person name="Hunnicutt L.E."/>
            <person name="Hall D.G."/>
        </authorList>
    </citation>
    <scope>NUCLEOTIDE SEQUENCE [MRNA]</scope>
</reference>
<accession>Q0PXV9</accession>
<dbReference type="EMBL" id="DQ673427">
    <property type="protein sequence ID" value="ABG82000.1"/>
    <property type="molecule type" value="mRNA"/>
</dbReference>
<dbReference type="RefSeq" id="NP_001284623.1">
    <property type="nucleotide sequence ID" value="NM_001297694.1"/>
</dbReference>
<dbReference type="SMR" id="Q0PXV9"/>
<dbReference type="STRING" id="121845.Q0PXV9"/>
<dbReference type="PaxDb" id="121845-Q0PXV9"/>
<dbReference type="EnsemblMetazoa" id="NM_001297694.1">
    <property type="protein sequence ID" value="NP_001284623.1"/>
    <property type="gene ID" value="GeneID_103511550"/>
</dbReference>
<dbReference type="EnsemblMetazoa" id="XM_026825275.1">
    <property type="protein sequence ID" value="XP_026681076.1"/>
    <property type="gene ID" value="GeneID_103511550"/>
</dbReference>
<dbReference type="EnsemblMetazoa" id="XM_026825276.1">
    <property type="protein sequence ID" value="XP_026681077.1"/>
    <property type="gene ID" value="GeneID_103511550"/>
</dbReference>
<dbReference type="EnsemblMetazoa" id="XM_026825277.1">
    <property type="protein sequence ID" value="XP_026681078.1"/>
    <property type="gene ID" value="GeneID_103511550"/>
</dbReference>
<dbReference type="EnsemblMetazoa" id="XM_026825278.1">
    <property type="protein sequence ID" value="XP_026681079.1"/>
    <property type="gene ID" value="GeneID_103511550"/>
</dbReference>
<dbReference type="EnsemblMetazoa" id="XM_026825279.1">
    <property type="protein sequence ID" value="XP_026681080.1"/>
    <property type="gene ID" value="GeneID_103511550"/>
</dbReference>
<dbReference type="GeneID" id="103511550"/>
<dbReference type="KEGG" id="dci:103511550"/>
<dbReference type="CTD" id="6139"/>
<dbReference type="OMA" id="QVNHAPC"/>
<dbReference type="OrthoDB" id="10254664at2759"/>
<dbReference type="Proteomes" id="UP000079169">
    <property type="component" value="Unplaced"/>
</dbReference>
<dbReference type="GO" id="GO:0022625">
    <property type="term" value="C:cytosolic large ribosomal subunit"/>
    <property type="evidence" value="ECO:0007669"/>
    <property type="project" value="TreeGrafter"/>
</dbReference>
<dbReference type="GO" id="GO:0003735">
    <property type="term" value="F:structural constituent of ribosome"/>
    <property type="evidence" value="ECO:0007669"/>
    <property type="project" value="InterPro"/>
</dbReference>
<dbReference type="GO" id="GO:0002181">
    <property type="term" value="P:cytoplasmic translation"/>
    <property type="evidence" value="ECO:0007669"/>
    <property type="project" value="TreeGrafter"/>
</dbReference>
<dbReference type="CDD" id="cd00336">
    <property type="entry name" value="Ribosomal_L22"/>
    <property type="match status" value="1"/>
</dbReference>
<dbReference type="FunFam" id="3.90.470.10:FF:000003">
    <property type="entry name" value="60S ribosomal protein L17"/>
    <property type="match status" value="1"/>
</dbReference>
<dbReference type="Gene3D" id="3.90.470.10">
    <property type="entry name" value="Ribosomal protein L22/L17"/>
    <property type="match status" value="1"/>
</dbReference>
<dbReference type="HAMAP" id="MF_01331_A">
    <property type="entry name" value="Ribosomal_uL22_A"/>
    <property type="match status" value="1"/>
</dbReference>
<dbReference type="InterPro" id="IPR001063">
    <property type="entry name" value="Ribosomal_uL22"/>
</dbReference>
<dbReference type="InterPro" id="IPR018260">
    <property type="entry name" value="Ribosomal_uL22_CS"/>
</dbReference>
<dbReference type="InterPro" id="IPR005721">
    <property type="entry name" value="Ribosomal_uL22_euk/arc"/>
</dbReference>
<dbReference type="InterPro" id="IPR036394">
    <property type="entry name" value="Ribosomal_uL22_sf"/>
</dbReference>
<dbReference type="NCBIfam" id="NF003260">
    <property type="entry name" value="PRK04223.1"/>
    <property type="match status" value="1"/>
</dbReference>
<dbReference type="NCBIfam" id="TIGR01038">
    <property type="entry name" value="uL22_arch_euk"/>
    <property type="match status" value="1"/>
</dbReference>
<dbReference type="PANTHER" id="PTHR11593">
    <property type="entry name" value="60S RIBOSOMAL PROTEIN L17"/>
    <property type="match status" value="1"/>
</dbReference>
<dbReference type="PANTHER" id="PTHR11593:SF10">
    <property type="entry name" value="60S RIBOSOMAL PROTEIN L17"/>
    <property type="match status" value="1"/>
</dbReference>
<dbReference type="Pfam" id="PF00237">
    <property type="entry name" value="Ribosomal_L22"/>
    <property type="match status" value="1"/>
</dbReference>
<dbReference type="SUPFAM" id="SSF54843">
    <property type="entry name" value="Ribosomal protein L22"/>
    <property type="match status" value="1"/>
</dbReference>
<dbReference type="PROSITE" id="PS00464">
    <property type="entry name" value="RIBOSOMAL_L22"/>
    <property type="match status" value="1"/>
</dbReference>
<gene>
    <name type="primary">RpL17</name>
</gene>
<organism>
    <name type="scientific">Diaphorina citri</name>
    <name type="common">Asian citrus psyllid</name>
    <dbReference type="NCBI Taxonomy" id="121845"/>
    <lineage>
        <taxon>Eukaryota</taxon>
        <taxon>Metazoa</taxon>
        <taxon>Ecdysozoa</taxon>
        <taxon>Arthropoda</taxon>
        <taxon>Hexapoda</taxon>
        <taxon>Insecta</taxon>
        <taxon>Pterygota</taxon>
        <taxon>Neoptera</taxon>
        <taxon>Paraneoptera</taxon>
        <taxon>Hemiptera</taxon>
        <taxon>Sternorrhyncha</taxon>
        <taxon>Psylloidea</taxon>
        <taxon>Psyllidae</taxon>
        <taxon>Diaphorininae</taxon>
        <taxon>Diaphorina</taxon>
    </lineage>
</organism>
<sequence length="185" mass="21676">MGRYSKEPRNPTKSCKARGSNLRVHFKNTRETAKTISKMPLRRAIKFLKNVKDQLECVPFRRYNGGVGRCAQAKQWGTTQGRWPRKSADFLLQLLKNAESNADYRGLDTDRLVIEHIQVNRAPRLRRRTYRAHGRINPYMSSPCHIEVILSERERVVAKPREDEPHKKKISKKKLARAKEKMLRE</sequence>
<evidence type="ECO:0000256" key="1">
    <source>
        <dbReference type="SAM" id="MobiDB-lite"/>
    </source>
</evidence>
<evidence type="ECO:0000305" key="2"/>
<name>RL17_DIACI</name>
<feature type="chain" id="PRO_0000323411" description="Large ribosomal subunit protein uL22">
    <location>
        <begin position="1"/>
        <end position="185"/>
    </location>
</feature>
<feature type="region of interest" description="Disordered" evidence="1">
    <location>
        <begin position="158"/>
        <end position="185"/>
    </location>
</feature>
<feature type="compositionally biased region" description="Basic residues" evidence="1">
    <location>
        <begin position="167"/>
        <end position="176"/>
    </location>
</feature>
<proteinExistence type="evidence at transcript level"/>
<comment type="similarity">
    <text evidence="2">Belongs to the universal ribosomal protein uL22 family.</text>
</comment>